<sequence length="247" mass="27432">MKAVILIPARLDSSRLDRKMLADLEGEPLIVRTWRQALKSRLAEKVVVATDSREIAAVLDACGAEVVMTSPTASCGTERIAEAARHIEGDVFVNLQGDEPLISPENIDLALEPFFSENPPDCSTLVLPLRPDDHVQIEDPHQVKVVMDAKGFALYFSRSAIPFQRNMRPTTIVYRHIGLYAFSADVLQKFASLPPSMLEEAESLEQLRLLENGFRIQCVTTLVDNPGVNTVEDLEQVRRIIRSSLPG</sequence>
<feature type="chain" id="PRO_1000116892" description="3-deoxy-manno-octulosonate cytidylyltransferase">
    <location>
        <begin position="1"/>
        <end position="247"/>
    </location>
</feature>
<organism>
    <name type="scientific">Pelodictyon phaeoclathratiforme (strain DSM 5477 / BU-1)</name>
    <dbReference type="NCBI Taxonomy" id="324925"/>
    <lineage>
        <taxon>Bacteria</taxon>
        <taxon>Pseudomonadati</taxon>
        <taxon>Chlorobiota</taxon>
        <taxon>Chlorobiia</taxon>
        <taxon>Chlorobiales</taxon>
        <taxon>Chlorobiaceae</taxon>
        <taxon>Chlorobium/Pelodictyon group</taxon>
        <taxon>Pelodictyon</taxon>
    </lineage>
</organism>
<protein>
    <recommendedName>
        <fullName evidence="1">3-deoxy-manno-octulosonate cytidylyltransferase</fullName>
        <ecNumber evidence="1">2.7.7.38</ecNumber>
    </recommendedName>
    <alternativeName>
        <fullName evidence="1">CMP-2-keto-3-deoxyoctulosonic acid synthase</fullName>
        <shortName evidence="1">CKS</shortName>
        <shortName evidence="1">CMP-KDO synthase</shortName>
    </alternativeName>
</protein>
<gene>
    <name evidence="1" type="primary">kdsB</name>
    <name type="ordered locus">Ppha_2414</name>
</gene>
<keyword id="KW-0963">Cytoplasm</keyword>
<keyword id="KW-0448">Lipopolysaccharide biosynthesis</keyword>
<keyword id="KW-0548">Nucleotidyltransferase</keyword>
<keyword id="KW-1185">Reference proteome</keyword>
<keyword id="KW-0808">Transferase</keyword>
<proteinExistence type="inferred from homology"/>
<dbReference type="EC" id="2.7.7.38" evidence="1"/>
<dbReference type="EMBL" id="CP001110">
    <property type="protein sequence ID" value="ACF44602.1"/>
    <property type="molecule type" value="Genomic_DNA"/>
</dbReference>
<dbReference type="RefSeq" id="WP_012509076.1">
    <property type="nucleotide sequence ID" value="NC_011060.1"/>
</dbReference>
<dbReference type="SMR" id="B4SES6"/>
<dbReference type="STRING" id="324925.Ppha_2414"/>
<dbReference type="KEGG" id="pph:Ppha_2414"/>
<dbReference type="eggNOG" id="COG1212">
    <property type="taxonomic scope" value="Bacteria"/>
</dbReference>
<dbReference type="HOGENOM" id="CLU_065038_0_1_10"/>
<dbReference type="OrthoDB" id="9815559at2"/>
<dbReference type="UniPathway" id="UPA00030"/>
<dbReference type="UniPathway" id="UPA00358">
    <property type="reaction ID" value="UER00476"/>
</dbReference>
<dbReference type="Proteomes" id="UP000002724">
    <property type="component" value="Chromosome"/>
</dbReference>
<dbReference type="GO" id="GO:0005829">
    <property type="term" value="C:cytosol"/>
    <property type="evidence" value="ECO:0007669"/>
    <property type="project" value="TreeGrafter"/>
</dbReference>
<dbReference type="GO" id="GO:0008690">
    <property type="term" value="F:3-deoxy-manno-octulosonate cytidylyltransferase activity"/>
    <property type="evidence" value="ECO:0007669"/>
    <property type="project" value="UniProtKB-UniRule"/>
</dbReference>
<dbReference type="GO" id="GO:0033468">
    <property type="term" value="P:CMP-keto-3-deoxy-D-manno-octulosonic acid biosynthetic process"/>
    <property type="evidence" value="ECO:0007669"/>
    <property type="project" value="UniProtKB-UniRule"/>
</dbReference>
<dbReference type="GO" id="GO:0009103">
    <property type="term" value="P:lipopolysaccharide biosynthetic process"/>
    <property type="evidence" value="ECO:0007669"/>
    <property type="project" value="UniProtKB-UniRule"/>
</dbReference>
<dbReference type="CDD" id="cd02517">
    <property type="entry name" value="CMP-KDO-Synthetase"/>
    <property type="match status" value="1"/>
</dbReference>
<dbReference type="Gene3D" id="3.90.550.10">
    <property type="entry name" value="Spore Coat Polysaccharide Biosynthesis Protein SpsA, Chain A"/>
    <property type="match status" value="1"/>
</dbReference>
<dbReference type="HAMAP" id="MF_00057">
    <property type="entry name" value="KdsB"/>
    <property type="match status" value="1"/>
</dbReference>
<dbReference type="InterPro" id="IPR003329">
    <property type="entry name" value="Cytidylyl_trans"/>
</dbReference>
<dbReference type="InterPro" id="IPR004528">
    <property type="entry name" value="KdsB"/>
</dbReference>
<dbReference type="InterPro" id="IPR029044">
    <property type="entry name" value="Nucleotide-diphossugar_trans"/>
</dbReference>
<dbReference type="NCBIfam" id="TIGR00466">
    <property type="entry name" value="kdsB"/>
    <property type="match status" value="1"/>
</dbReference>
<dbReference type="NCBIfam" id="NF003950">
    <property type="entry name" value="PRK05450.1-3"/>
    <property type="match status" value="1"/>
</dbReference>
<dbReference type="NCBIfam" id="NF003952">
    <property type="entry name" value="PRK05450.1-5"/>
    <property type="match status" value="1"/>
</dbReference>
<dbReference type="NCBIfam" id="NF009905">
    <property type="entry name" value="PRK13368.1"/>
    <property type="match status" value="1"/>
</dbReference>
<dbReference type="PANTHER" id="PTHR42866">
    <property type="entry name" value="3-DEOXY-MANNO-OCTULOSONATE CYTIDYLYLTRANSFERASE"/>
    <property type="match status" value="1"/>
</dbReference>
<dbReference type="PANTHER" id="PTHR42866:SF2">
    <property type="entry name" value="3-DEOXY-MANNO-OCTULOSONATE CYTIDYLYLTRANSFERASE, MITOCHONDRIAL"/>
    <property type="match status" value="1"/>
</dbReference>
<dbReference type="Pfam" id="PF02348">
    <property type="entry name" value="CTP_transf_3"/>
    <property type="match status" value="1"/>
</dbReference>
<dbReference type="SUPFAM" id="SSF53448">
    <property type="entry name" value="Nucleotide-diphospho-sugar transferases"/>
    <property type="match status" value="1"/>
</dbReference>
<accession>B4SES6</accession>
<name>KDSB_PELPB</name>
<evidence type="ECO:0000255" key="1">
    <source>
        <dbReference type="HAMAP-Rule" id="MF_00057"/>
    </source>
</evidence>
<reference key="1">
    <citation type="submission" date="2008-06" db="EMBL/GenBank/DDBJ databases">
        <title>Complete sequence of Pelodictyon phaeoclathratiforme BU-1.</title>
        <authorList>
            <consortium name="US DOE Joint Genome Institute"/>
            <person name="Lucas S."/>
            <person name="Copeland A."/>
            <person name="Lapidus A."/>
            <person name="Glavina del Rio T."/>
            <person name="Dalin E."/>
            <person name="Tice H."/>
            <person name="Bruce D."/>
            <person name="Goodwin L."/>
            <person name="Pitluck S."/>
            <person name="Schmutz J."/>
            <person name="Larimer F."/>
            <person name="Land M."/>
            <person name="Hauser L."/>
            <person name="Kyrpides N."/>
            <person name="Mikhailova N."/>
            <person name="Liu Z."/>
            <person name="Li T."/>
            <person name="Zhao F."/>
            <person name="Overmann J."/>
            <person name="Bryant D.A."/>
            <person name="Richardson P."/>
        </authorList>
    </citation>
    <scope>NUCLEOTIDE SEQUENCE [LARGE SCALE GENOMIC DNA]</scope>
    <source>
        <strain>DSM 5477 / BU-1</strain>
    </source>
</reference>
<comment type="function">
    <text evidence="1">Activates KDO (a required 8-carbon sugar) for incorporation into bacterial lipopolysaccharide in Gram-negative bacteria.</text>
</comment>
<comment type="catalytic activity">
    <reaction evidence="1">
        <text>3-deoxy-alpha-D-manno-oct-2-ulosonate + CTP = CMP-3-deoxy-beta-D-manno-octulosonate + diphosphate</text>
        <dbReference type="Rhea" id="RHEA:23448"/>
        <dbReference type="ChEBI" id="CHEBI:33019"/>
        <dbReference type="ChEBI" id="CHEBI:37563"/>
        <dbReference type="ChEBI" id="CHEBI:85986"/>
        <dbReference type="ChEBI" id="CHEBI:85987"/>
        <dbReference type="EC" id="2.7.7.38"/>
    </reaction>
</comment>
<comment type="pathway">
    <text evidence="1">Nucleotide-sugar biosynthesis; CMP-3-deoxy-D-manno-octulosonate biosynthesis; CMP-3-deoxy-D-manno-octulosonate from 3-deoxy-D-manno-octulosonate and CTP: step 1/1.</text>
</comment>
<comment type="pathway">
    <text evidence="1">Bacterial outer membrane biogenesis; lipopolysaccharide biosynthesis.</text>
</comment>
<comment type="subcellular location">
    <subcellularLocation>
        <location evidence="1">Cytoplasm</location>
    </subcellularLocation>
</comment>
<comment type="similarity">
    <text evidence="1">Belongs to the KdsB family.</text>
</comment>